<reference key="1">
    <citation type="journal article" date="2005" name="Science">
        <title>The transcriptional landscape of the mammalian genome.</title>
        <authorList>
            <person name="Carninci P."/>
            <person name="Kasukawa T."/>
            <person name="Katayama S."/>
            <person name="Gough J."/>
            <person name="Frith M.C."/>
            <person name="Maeda N."/>
            <person name="Oyama R."/>
            <person name="Ravasi T."/>
            <person name="Lenhard B."/>
            <person name="Wells C."/>
            <person name="Kodzius R."/>
            <person name="Shimokawa K."/>
            <person name="Bajic V.B."/>
            <person name="Brenner S.E."/>
            <person name="Batalov S."/>
            <person name="Forrest A.R."/>
            <person name="Zavolan M."/>
            <person name="Davis M.J."/>
            <person name="Wilming L.G."/>
            <person name="Aidinis V."/>
            <person name="Allen J.E."/>
            <person name="Ambesi-Impiombato A."/>
            <person name="Apweiler R."/>
            <person name="Aturaliya R.N."/>
            <person name="Bailey T.L."/>
            <person name="Bansal M."/>
            <person name="Baxter L."/>
            <person name="Beisel K.W."/>
            <person name="Bersano T."/>
            <person name="Bono H."/>
            <person name="Chalk A.M."/>
            <person name="Chiu K.P."/>
            <person name="Choudhary V."/>
            <person name="Christoffels A."/>
            <person name="Clutterbuck D.R."/>
            <person name="Crowe M.L."/>
            <person name="Dalla E."/>
            <person name="Dalrymple B.P."/>
            <person name="de Bono B."/>
            <person name="Della Gatta G."/>
            <person name="di Bernardo D."/>
            <person name="Down T."/>
            <person name="Engstrom P."/>
            <person name="Fagiolini M."/>
            <person name="Faulkner G."/>
            <person name="Fletcher C.F."/>
            <person name="Fukushima T."/>
            <person name="Furuno M."/>
            <person name="Futaki S."/>
            <person name="Gariboldi M."/>
            <person name="Georgii-Hemming P."/>
            <person name="Gingeras T.R."/>
            <person name="Gojobori T."/>
            <person name="Green R.E."/>
            <person name="Gustincich S."/>
            <person name="Harbers M."/>
            <person name="Hayashi Y."/>
            <person name="Hensch T.K."/>
            <person name="Hirokawa N."/>
            <person name="Hill D."/>
            <person name="Huminiecki L."/>
            <person name="Iacono M."/>
            <person name="Ikeo K."/>
            <person name="Iwama A."/>
            <person name="Ishikawa T."/>
            <person name="Jakt M."/>
            <person name="Kanapin A."/>
            <person name="Katoh M."/>
            <person name="Kawasawa Y."/>
            <person name="Kelso J."/>
            <person name="Kitamura H."/>
            <person name="Kitano H."/>
            <person name="Kollias G."/>
            <person name="Krishnan S.P."/>
            <person name="Kruger A."/>
            <person name="Kummerfeld S.K."/>
            <person name="Kurochkin I.V."/>
            <person name="Lareau L.F."/>
            <person name="Lazarevic D."/>
            <person name="Lipovich L."/>
            <person name="Liu J."/>
            <person name="Liuni S."/>
            <person name="McWilliam S."/>
            <person name="Madan Babu M."/>
            <person name="Madera M."/>
            <person name="Marchionni L."/>
            <person name="Matsuda H."/>
            <person name="Matsuzawa S."/>
            <person name="Miki H."/>
            <person name="Mignone F."/>
            <person name="Miyake S."/>
            <person name="Morris K."/>
            <person name="Mottagui-Tabar S."/>
            <person name="Mulder N."/>
            <person name="Nakano N."/>
            <person name="Nakauchi H."/>
            <person name="Ng P."/>
            <person name="Nilsson R."/>
            <person name="Nishiguchi S."/>
            <person name="Nishikawa S."/>
            <person name="Nori F."/>
            <person name="Ohara O."/>
            <person name="Okazaki Y."/>
            <person name="Orlando V."/>
            <person name="Pang K.C."/>
            <person name="Pavan W.J."/>
            <person name="Pavesi G."/>
            <person name="Pesole G."/>
            <person name="Petrovsky N."/>
            <person name="Piazza S."/>
            <person name="Reed J."/>
            <person name="Reid J.F."/>
            <person name="Ring B.Z."/>
            <person name="Ringwald M."/>
            <person name="Rost B."/>
            <person name="Ruan Y."/>
            <person name="Salzberg S.L."/>
            <person name="Sandelin A."/>
            <person name="Schneider C."/>
            <person name="Schoenbach C."/>
            <person name="Sekiguchi K."/>
            <person name="Semple C.A."/>
            <person name="Seno S."/>
            <person name="Sessa L."/>
            <person name="Sheng Y."/>
            <person name="Shibata Y."/>
            <person name="Shimada H."/>
            <person name="Shimada K."/>
            <person name="Silva D."/>
            <person name="Sinclair B."/>
            <person name="Sperling S."/>
            <person name="Stupka E."/>
            <person name="Sugiura K."/>
            <person name="Sultana R."/>
            <person name="Takenaka Y."/>
            <person name="Taki K."/>
            <person name="Tammoja K."/>
            <person name="Tan S.L."/>
            <person name="Tang S."/>
            <person name="Taylor M.S."/>
            <person name="Tegner J."/>
            <person name="Teichmann S.A."/>
            <person name="Ueda H.R."/>
            <person name="van Nimwegen E."/>
            <person name="Verardo R."/>
            <person name="Wei C.L."/>
            <person name="Yagi K."/>
            <person name="Yamanishi H."/>
            <person name="Zabarovsky E."/>
            <person name="Zhu S."/>
            <person name="Zimmer A."/>
            <person name="Hide W."/>
            <person name="Bult C."/>
            <person name="Grimmond S.M."/>
            <person name="Teasdale R.D."/>
            <person name="Liu E.T."/>
            <person name="Brusic V."/>
            <person name="Quackenbush J."/>
            <person name="Wahlestedt C."/>
            <person name="Mattick J.S."/>
            <person name="Hume D.A."/>
            <person name="Kai C."/>
            <person name="Sasaki D."/>
            <person name="Tomaru Y."/>
            <person name="Fukuda S."/>
            <person name="Kanamori-Katayama M."/>
            <person name="Suzuki M."/>
            <person name="Aoki J."/>
            <person name="Arakawa T."/>
            <person name="Iida J."/>
            <person name="Imamura K."/>
            <person name="Itoh M."/>
            <person name="Kato T."/>
            <person name="Kawaji H."/>
            <person name="Kawagashira N."/>
            <person name="Kawashima T."/>
            <person name="Kojima M."/>
            <person name="Kondo S."/>
            <person name="Konno H."/>
            <person name="Nakano K."/>
            <person name="Ninomiya N."/>
            <person name="Nishio T."/>
            <person name="Okada M."/>
            <person name="Plessy C."/>
            <person name="Shibata K."/>
            <person name="Shiraki T."/>
            <person name="Suzuki S."/>
            <person name="Tagami M."/>
            <person name="Waki K."/>
            <person name="Watahiki A."/>
            <person name="Okamura-Oho Y."/>
            <person name="Suzuki H."/>
            <person name="Kawai J."/>
            <person name="Hayashizaki Y."/>
        </authorList>
    </citation>
    <scope>NUCLEOTIDE SEQUENCE [LARGE SCALE MRNA]</scope>
    <source>
        <strain>C57BL/6J</strain>
        <tissue>Testis</tissue>
    </source>
</reference>
<reference key="2">
    <citation type="journal article" date="2009" name="PLoS Biol.">
        <title>Lineage-specific biology revealed by a finished genome assembly of the mouse.</title>
        <authorList>
            <person name="Church D.M."/>
            <person name="Goodstadt L."/>
            <person name="Hillier L.W."/>
            <person name="Zody M.C."/>
            <person name="Goldstein S."/>
            <person name="She X."/>
            <person name="Bult C.J."/>
            <person name="Agarwala R."/>
            <person name="Cherry J.L."/>
            <person name="DiCuccio M."/>
            <person name="Hlavina W."/>
            <person name="Kapustin Y."/>
            <person name="Meric P."/>
            <person name="Maglott D."/>
            <person name="Birtle Z."/>
            <person name="Marques A.C."/>
            <person name="Graves T."/>
            <person name="Zhou S."/>
            <person name="Teague B."/>
            <person name="Potamousis K."/>
            <person name="Churas C."/>
            <person name="Place M."/>
            <person name="Herschleb J."/>
            <person name="Runnheim R."/>
            <person name="Forrest D."/>
            <person name="Amos-Landgraf J."/>
            <person name="Schwartz D.C."/>
            <person name="Cheng Z."/>
            <person name="Lindblad-Toh K."/>
            <person name="Eichler E.E."/>
            <person name="Ponting C.P."/>
        </authorList>
    </citation>
    <scope>NUCLEOTIDE SEQUENCE [LARGE SCALE GENOMIC DNA]</scope>
    <source>
        <strain>C57BL/6J</strain>
    </source>
</reference>
<keyword id="KW-0175">Coiled coil</keyword>
<keyword id="KW-0472">Membrane</keyword>
<keyword id="KW-1185">Reference proteome</keyword>
<keyword id="KW-0735">Signal-anchor</keyword>
<keyword id="KW-0812">Transmembrane</keyword>
<keyword id="KW-1133">Transmembrane helix</keyword>
<gene>
    <name type="primary">Smim23</name>
</gene>
<name>SIM23_MOUSE</name>
<comment type="subcellular location">
    <subcellularLocation>
        <location evidence="2">Membrane</location>
        <topology evidence="2">Single-pass membrane protein</topology>
    </subcellularLocation>
</comment>
<evidence type="ECO:0000255" key="1"/>
<evidence type="ECO:0000305" key="2"/>
<feature type="chain" id="PRO_0000341238" description="Small integral membrane protein 23">
    <location>
        <begin position="1"/>
        <end position="136"/>
    </location>
</feature>
<feature type="topological domain" description="Cytoplasmic" evidence="1">
    <location>
        <begin position="1"/>
        <end position="31"/>
    </location>
</feature>
<feature type="transmembrane region" description="Helical; Signal-anchor for type II membrane protein" evidence="1">
    <location>
        <begin position="32"/>
        <end position="52"/>
    </location>
</feature>
<feature type="topological domain" description="Extracellular" evidence="1">
    <location>
        <begin position="53"/>
        <end position="136"/>
    </location>
</feature>
<feature type="coiled-coil region" evidence="1">
    <location>
        <begin position="92"/>
        <end position="124"/>
    </location>
</feature>
<dbReference type="EMBL" id="AK005748">
    <property type="protein sequence ID" value="BAB24220.1"/>
    <property type="molecule type" value="mRNA"/>
</dbReference>
<dbReference type="EMBL" id="AL669951">
    <property type="status" value="NOT_ANNOTATED_CDS"/>
    <property type="molecule type" value="Genomic_DNA"/>
</dbReference>
<dbReference type="CCDS" id="CCDS48767.1"/>
<dbReference type="RefSeq" id="NP_081326.1">
    <property type="nucleotide sequence ID" value="NM_027050.1"/>
</dbReference>
<dbReference type="SMR" id="Q9DAL0"/>
<dbReference type="STRING" id="10090.ENSMUSP00000020508"/>
<dbReference type="PaxDb" id="10090-ENSMUSP00000020508"/>
<dbReference type="ProteomicsDB" id="261234"/>
<dbReference type="Antibodypedia" id="64430">
    <property type="antibodies" value="3 antibodies from 3 providers"/>
</dbReference>
<dbReference type="Ensembl" id="ENSMUST00000020508.4">
    <property type="protein sequence ID" value="ENSMUSP00000020508.3"/>
    <property type="gene ID" value="ENSMUSG00000020270.10"/>
</dbReference>
<dbReference type="GeneID" id="69351"/>
<dbReference type="KEGG" id="mmu:69351"/>
<dbReference type="UCSC" id="uc007ikb.2">
    <property type="organism name" value="mouse"/>
</dbReference>
<dbReference type="AGR" id="MGI:1916601"/>
<dbReference type="CTD" id="644994"/>
<dbReference type="MGI" id="MGI:1916601">
    <property type="gene designation" value="Smim23"/>
</dbReference>
<dbReference type="VEuPathDB" id="HostDB:ENSMUSG00000020270"/>
<dbReference type="eggNOG" id="ENOG502TDUM">
    <property type="taxonomic scope" value="Eukaryota"/>
</dbReference>
<dbReference type="GeneTree" id="ENSGT00390000017300"/>
<dbReference type="HOGENOM" id="CLU_155321_0_0_1"/>
<dbReference type="InParanoid" id="Q9DAL0"/>
<dbReference type="OMA" id="GSRCEDK"/>
<dbReference type="OrthoDB" id="9450349at2759"/>
<dbReference type="TreeFam" id="TF338699"/>
<dbReference type="BioGRID-ORCS" id="69351">
    <property type="hits" value="2 hits in 75 CRISPR screens"/>
</dbReference>
<dbReference type="ChiTaRS" id="Smim23">
    <property type="organism name" value="mouse"/>
</dbReference>
<dbReference type="PRO" id="PR:Q9DAL0"/>
<dbReference type="Proteomes" id="UP000000589">
    <property type="component" value="Chromosome 11"/>
</dbReference>
<dbReference type="RNAct" id="Q9DAL0">
    <property type="molecule type" value="protein"/>
</dbReference>
<dbReference type="Bgee" id="ENSMUSG00000020270">
    <property type="expression patterns" value="Expressed in spermatid and 15 other cell types or tissues"/>
</dbReference>
<dbReference type="ExpressionAtlas" id="Q9DAL0">
    <property type="expression patterns" value="baseline and differential"/>
</dbReference>
<dbReference type="GO" id="GO:0016020">
    <property type="term" value="C:membrane"/>
    <property type="evidence" value="ECO:0007669"/>
    <property type="project" value="UniProtKB-SubCell"/>
</dbReference>
<dbReference type="InterPro" id="IPR027880">
    <property type="entry name" value="DUF4635"/>
</dbReference>
<dbReference type="PANTHER" id="PTHR37865">
    <property type="entry name" value="SMALL INTEGRAL MEMBRANE PROTEIN 23"/>
    <property type="match status" value="1"/>
</dbReference>
<dbReference type="PANTHER" id="PTHR37865:SF1">
    <property type="entry name" value="SMALL INTEGRAL MEMBRANE PROTEIN 23"/>
    <property type="match status" value="1"/>
</dbReference>
<dbReference type="Pfam" id="PF15466">
    <property type="entry name" value="DUF4635"/>
    <property type="match status" value="1"/>
</dbReference>
<proteinExistence type="evidence at transcript level"/>
<accession>Q9DAL0</accession>
<protein>
    <recommendedName>
        <fullName>Small integral membrane protein 23</fullName>
    </recommendedName>
</protein>
<sequence>MTIQKTGCRGREAAEVVEQRRRSHHCDDRKQTLLALLILVLYLGMGISGSSWEVSGQTKDCNHFQNPVTPQGFEYQTKEPAEEPLRTLRKWLKINLHGFLEKLEKEVRELEQLVRDLEFWLDALLGDLRPEDPCFT</sequence>
<organism>
    <name type="scientific">Mus musculus</name>
    <name type="common">Mouse</name>
    <dbReference type="NCBI Taxonomy" id="10090"/>
    <lineage>
        <taxon>Eukaryota</taxon>
        <taxon>Metazoa</taxon>
        <taxon>Chordata</taxon>
        <taxon>Craniata</taxon>
        <taxon>Vertebrata</taxon>
        <taxon>Euteleostomi</taxon>
        <taxon>Mammalia</taxon>
        <taxon>Eutheria</taxon>
        <taxon>Euarchontoglires</taxon>
        <taxon>Glires</taxon>
        <taxon>Rodentia</taxon>
        <taxon>Myomorpha</taxon>
        <taxon>Muroidea</taxon>
        <taxon>Muridae</taxon>
        <taxon>Murinae</taxon>
        <taxon>Mus</taxon>
        <taxon>Mus</taxon>
    </lineage>
</organism>